<feature type="chain" id="PRO_1000053301" description="ATP synthase gamma chain">
    <location>
        <begin position="1"/>
        <end position="291"/>
    </location>
</feature>
<gene>
    <name evidence="1" type="primary">atpG</name>
    <name type="ordered locus">Rmet_3495</name>
</gene>
<protein>
    <recommendedName>
        <fullName evidence="1">ATP synthase gamma chain</fullName>
    </recommendedName>
    <alternativeName>
        <fullName evidence="1">ATP synthase F1 sector gamma subunit</fullName>
    </alternativeName>
    <alternativeName>
        <fullName evidence="1">F-ATPase gamma subunit</fullName>
    </alternativeName>
</protein>
<proteinExistence type="inferred from homology"/>
<accession>Q1LHK9</accession>
<comment type="function">
    <text evidence="1">Produces ATP from ADP in the presence of a proton gradient across the membrane. The gamma chain is believed to be important in regulating ATPase activity and the flow of protons through the CF(0) complex.</text>
</comment>
<comment type="subunit">
    <text evidence="1">F-type ATPases have 2 components, CF(1) - the catalytic core - and CF(0) - the membrane proton channel. CF(1) has five subunits: alpha(3), beta(3), gamma(1), delta(1), epsilon(1). CF(0) has three main subunits: a, b and c.</text>
</comment>
<comment type="subcellular location">
    <subcellularLocation>
        <location evidence="1">Cell inner membrane</location>
        <topology evidence="1">Peripheral membrane protein</topology>
    </subcellularLocation>
</comment>
<comment type="similarity">
    <text evidence="1">Belongs to the ATPase gamma chain family.</text>
</comment>
<organism>
    <name type="scientific">Cupriavidus metallidurans (strain ATCC 43123 / DSM 2839 / NBRC 102507 / CH34)</name>
    <name type="common">Ralstonia metallidurans</name>
    <dbReference type="NCBI Taxonomy" id="266264"/>
    <lineage>
        <taxon>Bacteria</taxon>
        <taxon>Pseudomonadati</taxon>
        <taxon>Pseudomonadota</taxon>
        <taxon>Betaproteobacteria</taxon>
        <taxon>Burkholderiales</taxon>
        <taxon>Burkholderiaceae</taxon>
        <taxon>Cupriavidus</taxon>
    </lineage>
</organism>
<sequence>MAGTKEIRTKIKSVQNTRKITKAMEMVAASKMRKAQERMRNARPYAEKVRNIAAHLASANPEFKHPFMVARDVKRAGMIVVTTDKGLCGGLNTNVLRAVTNELKDLQGQGVNVQATAIGTKGMQFLGRIGAKVVSHVVQLGDTPHLEKLIGAIKVQLDAYTNGEVDAVYLAYTKFINTMKQEPMVEQLLPLAADKLSQTEDEKRAYSWDYIYEPDAQTVVEELLVRYVEALVYQAVAENMASEQSARMVAMKAASDNAKNVIGELQLVYNKTRQAAITKELSEIVSGAAAV</sequence>
<evidence type="ECO:0000255" key="1">
    <source>
        <dbReference type="HAMAP-Rule" id="MF_00815"/>
    </source>
</evidence>
<dbReference type="EMBL" id="CP000352">
    <property type="protein sequence ID" value="ABF10367.1"/>
    <property type="molecule type" value="Genomic_DNA"/>
</dbReference>
<dbReference type="RefSeq" id="WP_008650158.1">
    <property type="nucleotide sequence ID" value="NC_007973.1"/>
</dbReference>
<dbReference type="SMR" id="Q1LHK9"/>
<dbReference type="STRING" id="266264.Rmet_3495"/>
<dbReference type="GeneID" id="60822601"/>
<dbReference type="KEGG" id="rme:Rmet_3495"/>
<dbReference type="eggNOG" id="COG0224">
    <property type="taxonomic scope" value="Bacteria"/>
</dbReference>
<dbReference type="HOGENOM" id="CLU_050669_0_1_4"/>
<dbReference type="Proteomes" id="UP000002429">
    <property type="component" value="Chromosome"/>
</dbReference>
<dbReference type="GO" id="GO:0005886">
    <property type="term" value="C:plasma membrane"/>
    <property type="evidence" value="ECO:0007669"/>
    <property type="project" value="UniProtKB-SubCell"/>
</dbReference>
<dbReference type="GO" id="GO:0045259">
    <property type="term" value="C:proton-transporting ATP synthase complex"/>
    <property type="evidence" value="ECO:0007669"/>
    <property type="project" value="UniProtKB-KW"/>
</dbReference>
<dbReference type="GO" id="GO:0005524">
    <property type="term" value="F:ATP binding"/>
    <property type="evidence" value="ECO:0007669"/>
    <property type="project" value="UniProtKB-UniRule"/>
</dbReference>
<dbReference type="GO" id="GO:0046933">
    <property type="term" value="F:proton-transporting ATP synthase activity, rotational mechanism"/>
    <property type="evidence" value="ECO:0007669"/>
    <property type="project" value="UniProtKB-UniRule"/>
</dbReference>
<dbReference type="GO" id="GO:0042777">
    <property type="term" value="P:proton motive force-driven plasma membrane ATP synthesis"/>
    <property type="evidence" value="ECO:0007669"/>
    <property type="project" value="UniProtKB-UniRule"/>
</dbReference>
<dbReference type="CDD" id="cd12151">
    <property type="entry name" value="F1-ATPase_gamma"/>
    <property type="match status" value="1"/>
</dbReference>
<dbReference type="FunFam" id="1.10.287.80:FF:000005">
    <property type="entry name" value="ATP synthase gamma chain"/>
    <property type="match status" value="1"/>
</dbReference>
<dbReference type="Gene3D" id="3.40.1380.10">
    <property type="match status" value="1"/>
</dbReference>
<dbReference type="Gene3D" id="1.10.287.80">
    <property type="entry name" value="ATP synthase, gamma subunit, helix hairpin domain"/>
    <property type="match status" value="1"/>
</dbReference>
<dbReference type="HAMAP" id="MF_00815">
    <property type="entry name" value="ATP_synth_gamma_bact"/>
    <property type="match status" value="1"/>
</dbReference>
<dbReference type="InterPro" id="IPR035968">
    <property type="entry name" value="ATP_synth_F1_ATPase_gsu"/>
</dbReference>
<dbReference type="InterPro" id="IPR000131">
    <property type="entry name" value="ATP_synth_F1_gsu"/>
</dbReference>
<dbReference type="InterPro" id="IPR023632">
    <property type="entry name" value="ATP_synth_F1_gsu_CS"/>
</dbReference>
<dbReference type="NCBIfam" id="TIGR01146">
    <property type="entry name" value="ATPsyn_F1gamma"/>
    <property type="match status" value="1"/>
</dbReference>
<dbReference type="NCBIfam" id="NF004144">
    <property type="entry name" value="PRK05621.1-1"/>
    <property type="match status" value="1"/>
</dbReference>
<dbReference type="PANTHER" id="PTHR11693">
    <property type="entry name" value="ATP SYNTHASE GAMMA CHAIN"/>
    <property type="match status" value="1"/>
</dbReference>
<dbReference type="PANTHER" id="PTHR11693:SF22">
    <property type="entry name" value="ATP SYNTHASE SUBUNIT GAMMA, MITOCHONDRIAL"/>
    <property type="match status" value="1"/>
</dbReference>
<dbReference type="Pfam" id="PF00231">
    <property type="entry name" value="ATP-synt"/>
    <property type="match status" value="1"/>
</dbReference>
<dbReference type="PRINTS" id="PR00126">
    <property type="entry name" value="ATPASEGAMMA"/>
</dbReference>
<dbReference type="SUPFAM" id="SSF52943">
    <property type="entry name" value="ATP synthase (F1-ATPase), gamma subunit"/>
    <property type="match status" value="1"/>
</dbReference>
<dbReference type="PROSITE" id="PS00153">
    <property type="entry name" value="ATPASE_GAMMA"/>
    <property type="match status" value="1"/>
</dbReference>
<name>ATPG_CUPMC</name>
<reference key="1">
    <citation type="journal article" date="2010" name="PLoS ONE">
        <title>The complete genome sequence of Cupriavidus metallidurans strain CH34, a master survivalist in harsh and anthropogenic environments.</title>
        <authorList>
            <person name="Janssen P.J."/>
            <person name="Van Houdt R."/>
            <person name="Moors H."/>
            <person name="Monsieurs P."/>
            <person name="Morin N."/>
            <person name="Michaux A."/>
            <person name="Benotmane M.A."/>
            <person name="Leys N."/>
            <person name="Vallaeys T."/>
            <person name="Lapidus A."/>
            <person name="Monchy S."/>
            <person name="Medigue C."/>
            <person name="Taghavi S."/>
            <person name="McCorkle S."/>
            <person name="Dunn J."/>
            <person name="van der Lelie D."/>
            <person name="Mergeay M."/>
        </authorList>
    </citation>
    <scope>NUCLEOTIDE SEQUENCE [LARGE SCALE GENOMIC DNA]</scope>
    <source>
        <strain>ATCC 43123 / DSM 2839 / NBRC 102507 / CH34</strain>
    </source>
</reference>
<keyword id="KW-0066">ATP synthesis</keyword>
<keyword id="KW-0997">Cell inner membrane</keyword>
<keyword id="KW-1003">Cell membrane</keyword>
<keyword id="KW-0139">CF(1)</keyword>
<keyword id="KW-0375">Hydrogen ion transport</keyword>
<keyword id="KW-0406">Ion transport</keyword>
<keyword id="KW-0472">Membrane</keyword>
<keyword id="KW-1185">Reference proteome</keyword>
<keyword id="KW-0813">Transport</keyword>